<organism>
    <name type="scientific">Lactococcus lactis subsp. lactis (strain IL1403)</name>
    <name type="common">Streptococcus lactis</name>
    <dbReference type="NCBI Taxonomy" id="272623"/>
    <lineage>
        <taxon>Bacteria</taxon>
        <taxon>Bacillati</taxon>
        <taxon>Bacillota</taxon>
        <taxon>Bacilli</taxon>
        <taxon>Lactobacillales</taxon>
        <taxon>Streptococcaceae</taxon>
        <taxon>Lactococcus</taxon>
    </lineage>
</organism>
<comment type="function">
    <text evidence="1">Part of the ABC transporter complex PotABCD involved in spermidine/putrescine import. Responsible for energy coupling to the transport system.</text>
</comment>
<comment type="catalytic activity">
    <reaction evidence="1">
        <text>ATP + H2O + polyamine-[polyamine-binding protein]Side 1 = ADP + phosphate + polyamineSide 2 + [polyamine-binding protein]Side 1.</text>
        <dbReference type="EC" id="7.6.2.11"/>
    </reaction>
</comment>
<comment type="subunit">
    <text evidence="1">The complex is composed of two ATP-binding proteins (PotA), two transmembrane proteins (PotB and PotC) and a solute-binding protein (PotD).</text>
</comment>
<comment type="subcellular location">
    <subcellularLocation>
        <location evidence="1">Cell membrane</location>
        <topology evidence="1">Peripheral membrane protein</topology>
    </subcellularLocation>
</comment>
<comment type="similarity">
    <text evidence="1">Belongs to the ABC transporter superfamily. Spermidine/putrescine importer (TC 3.A.1.11.1) family.</text>
</comment>
<dbReference type="EC" id="7.6.2.11" evidence="1"/>
<dbReference type="EMBL" id="AE005176">
    <property type="protein sequence ID" value="AAK05261.1"/>
    <property type="molecule type" value="Genomic_DNA"/>
</dbReference>
<dbReference type="PIR" id="C86770">
    <property type="entry name" value="C86770"/>
</dbReference>
<dbReference type="RefSeq" id="NP_267319.1">
    <property type="nucleotide sequence ID" value="NC_002662.1"/>
</dbReference>
<dbReference type="RefSeq" id="WP_003132123.1">
    <property type="nucleotide sequence ID" value="NC_002662.1"/>
</dbReference>
<dbReference type="SMR" id="Q9CGD4"/>
<dbReference type="PaxDb" id="272623-L175357"/>
<dbReference type="EnsemblBacteria" id="AAK05261">
    <property type="protein sequence ID" value="AAK05261"/>
    <property type="gene ID" value="L175357"/>
</dbReference>
<dbReference type="KEGG" id="lla:L175357"/>
<dbReference type="PATRIC" id="fig|272623.7.peg.1244"/>
<dbReference type="eggNOG" id="COG3842">
    <property type="taxonomic scope" value="Bacteria"/>
</dbReference>
<dbReference type="HOGENOM" id="CLU_000604_1_1_9"/>
<dbReference type="OrthoDB" id="9790614at2"/>
<dbReference type="Proteomes" id="UP000002196">
    <property type="component" value="Chromosome"/>
</dbReference>
<dbReference type="GO" id="GO:0043190">
    <property type="term" value="C:ATP-binding cassette (ABC) transporter complex"/>
    <property type="evidence" value="ECO:0007669"/>
    <property type="project" value="InterPro"/>
</dbReference>
<dbReference type="GO" id="GO:0015417">
    <property type="term" value="F:ABC-type polyamine transporter activity"/>
    <property type="evidence" value="ECO:0007669"/>
    <property type="project" value="UniProtKB-EC"/>
</dbReference>
<dbReference type="GO" id="GO:0005524">
    <property type="term" value="F:ATP binding"/>
    <property type="evidence" value="ECO:0007669"/>
    <property type="project" value="UniProtKB-KW"/>
</dbReference>
<dbReference type="GO" id="GO:0016887">
    <property type="term" value="F:ATP hydrolysis activity"/>
    <property type="evidence" value="ECO:0007669"/>
    <property type="project" value="InterPro"/>
</dbReference>
<dbReference type="FunFam" id="3.40.50.300:FF:000042">
    <property type="entry name" value="Maltose/maltodextrin ABC transporter, ATP-binding protein"/>
    <property type="match status" value="1"/>
</dbReference>
<dbReference type="Gene3D" id="2.40.50.100">
    <property type="match status" value="1"/>
</dbReference>
<dbReference type="Gene3D" id="3.40.50.300">
    <property type="entry name" value="P-loop containing nucleotide triphosphate hydrolases"/>
    <property type="match status" value="1"/>
</dbReference>
<dbReference type="InterPro" id="IPR003593">
    <property type="entry name" value="AAA+_ATPase"/>
</dbReference>
<dbReference type="InterPro" id="IPR050093">
    <property type="entry name" value="ABC_SmlMolc_Importer"/>
</dbReference>
<dbReference type="InterPro" id="IPR003439">
    <property type="entry name" value="ABC_transporter-like_ATP-bd"/>
</dbReference>
<dbReference type="InterPro" id="IPR017871">
    <property type="entry name" value="ABC_transporter-like_CS"/>
</dbReference>
<dbReference type="InterPro" id="IPR008995">
    <property type="entry name" value="Mo/tungstate-bd_C_term_dom"/>
</dbReference>
<dbReference type="InterPro" id="IPR027417">
    <property type="entry name" value="P-loop_NTPase"/>
</dbReference>
<dbReference type="InterPro" id="IPR013611">
    <property type="entry name" value="Transp-assoc_OB_typ2"/>
</dbReference>
<dbReference type="PANTHER" id="PTHR42781">
    <property type="entry name" value="SPERMIDINE/PUTRESCINE IMPORT ATP-BINDING PROTEIN POTA"/>
    <property type="match status" value="1"/>
</dbReference>
<dbReference type="PANTHER" id="PTHR42781:SF4">
    <property type="entry name" value="SPERMIDINE_PUTRESCINE IMPORT ATP-BINDING PROTEIN POTA"/>
    <property type="match status" value="1"/>
</dbReference>
<dbReference type="Pfam" id="PF00005">
    <property type="entry name" value="ABC_tran"/>
    <property type="match status" value="1"/>
</dbReference>
<dbReference type="Pfam" id="PF08402">
    <property type="entry name" value="TOBE_2"/>
    <property type="match status" value="1"/>
</dbReference>
<dbReference type="SMART" id="SM00382">
    <property type="entry name" value="AAA"/>
    <property type="match status" value="1"/>
</dbReference>
<dbReference type="SUPFAM" id="SSF50331">
    <property type="entry name" value="MOP-like"/>
    <property type="match status" value="1"/>
</dbReference>
<dbReference type="SUPFAM" id="SSF52540">
    <property type="entry name" value="P-loop containing nucleoside triphosphate hydrolases"/>
    <property type="match status" value="1"/>
</dbReference>
<dbReference type="PROSITE" id="PS00211">
    <property type="entry name" value="ABC_TRANSPORTER_1"/>
    <property type="match status" value="1"/>
</dbReference>
<dbReference type="PROSITE" id="PS50893">
    <property type="entry name" value="ABC_TRANSPORTER_2"/>
    <property type="match status" value="1"/>
</dbReference>
<dbReference type="PROSITE" id="PS51305">
    <property type="entry name" value="POTA"/>
    <property type="match status" value="1"/>
</dbReference>
<name>POTA_LACLA</name>
<protein>
    <recommendedName>
        <fullName evidence="1">Spermidine/putrescine import ATP-binding protein PotA</fullName>
        <ecNumber evidence="1">7.6.2.11</ecNumber>
    </recommendedName>
</protein>
<gene>
    <name evidence="1" type="primary">potA</name>
    <name type="ordered locus">LL1163</name>
    <name type="ORF">L175357</name>
</gene>
<reference key="1">
    <citation type="journal article" date="2001" name="Genome Res.">
        <title>The complete genome sequence of the lactic acid bacterium Lactococcus lactis ssp. lactis IL1403.</title>
        <authorList>
            <person name="Bolotin A."/>
            <person name="Wincker P."/>
            <person name="Mauger S."/>
            <person name="Jaillon O."/>
            <person name="Malarme K."/>
            <person name="Weissenbach J."/>
            <person name="Ehrlich S.D."/>
            <person name="Sorokin A."/>
        </authorList>
    </citation>
    <scope>NUCLEOTIDE SEQUENCE [LARGE SCALE GENOMIC DNA]</scope>
    <source>
        <strain>IL1403</strain>
    </source>
</reference>
<proteinExistence type="inferred from homology"/>
<accession>Q9CGD4</accession>
<feature type="chain" id="PRO_0000286237" description="Spermidine/putrescine import ATP-binding protein PotA">
    <location>
        <begin position="1"/>
        <end position="428"/>
    </location>
</feature>
<feature type="domain" description="ABC transporter" evidence="1">
    <location>
        <begin position="6"/>
        <end position="238"/>
    </location>
</feature>
<feature type="binding site" evidence="1">
    <location>
        <begin position="40"/>
        <end position="47"/>
    </location>
    <ligand>
        <name>ATP</name>
        <dbReference type="ChEBI" id="CHEBI:30616"/>
    </ligand>
</feature>
<evidence type="ECO:0000255" key="1">
    <source>
        <dbReference type="HAMAP-Rule" id="MF_01726"/>
    </source>
</evidence>
<keyword id="KW-0067">ATP-binding</keyword>
<keyword id="KW-1003">Cell membrane</keyword>
<keyword id="KW-0472">Membrane</keyword>
<keyword id="KW-0547">Nucleotide-binding</keyword>
<keyword id="KW-1185">Reference proteome</keyword>
<keyword id="KW-1278">Translocase</keyword>
<keyword id="KW-0813">Transport</keyword>
<sequence>MSKTIIEFKNVSKTYADTDTTVLKDISFELEEGKFYTLLGASGSGKSTILNIIAGLLDATDGDVILDNKRINDLPANKRNVHTIFQSYALFPNMNVFDNVAFALKIKGVDKKEIAKRVSESLKLVRLDGFEKRSITKLSGGQKQRVAIARAIIDRPKVLLLDESLSALDMKLRKDMQYELRELQQSLGITFIFVTHDQEEALAMSDWVFIMNEGEIVQSGTPTDIYDEPINHFVADFIGESNILNGRMIEDYLVEFNGQKFEAVDGGMRKNEPIEVVIRPEDIWFTLPDEGKFNVKVDTQLFRGVHYEIVAYDEFNNEWLIHSTHKAIVGETVGLDFDPEAIHIMRLNETEEEFDARIEEYVEEEETVGLANAVEEENAEEEAAIQEAVKEALENTMELTELAETVNEILQKQENEPESENKESGANK</sequence>